<protein>
    <recommendedName>
        <fullName evidence="1">Uridylate kinase</fullName>
        <shortName evidence="1">UK</shortName>
        <ecNumber evidence="1">2.7.4.22</ecNumber>
    </recommendedName>
    <alternativeName>
        <fullName evidence="1">Uridine monophosphate kinase</fullName>
        <shortName evidence="1">UMP kinase</shortName>
        <shortName evidence="1">UMPK</shortName>
    </alternativeName>
</protein>
<reference key="1">
    <citation type="journal article" date="2002" name="Mol. Microbiol.">
        <title>Genome sequence of Streptococcus agalactiae, a pathogen causing invasive neonatal disease.</title>
        <authorList>
            <person name="Glaser P."/>
            <person name="Rusniok C."/>
            <person name="Buchrieser C."/>
            <person name="Chevalier F."/>
            <person name="Frangeul L."/>
            <person name="Msadek T."/>
            <person name="Zouine M."/>
            <person name="Couve E."/>
            <person name="Lalioui L."/>
            <person name="Poyart C."/>
            <person name="Trieu-Cuot P."/>
            <person name="Kunst F."/>
        </authorList>
    </citation>
    <scope>NUCLEOTIDE SEQUENCE [LARGE SCALE GENOMIC DNA]</scope>
    <source>
        <strain>NEM316</strain>
    </source>
</reference>
<accession>Q8E431</accession>
<sequence>MEPKYQRILIKLSGEALAGDKGVGIDIPTVQSIAKEIAEVHNSGVQIALVIGGGNLWRGEPAAEAGMDRVQADYTGMLGTVMNALVMADSLQQYGVDTRVQTAIPMQTVAEPYVRGRALRHLEKDRIVVFGAGIGSPYFSTDTTAALRAAEIEAEAILMAKNGVDGVYNADPKKDANAVKFDELTHVEVIKRGLKIMDATASTISMDNDIDLVVFNMNETGNIKRVVLGEQIGTTVSNKASE</sequence>
<organism>
    <name type="scientific">Streptococcus agalactiae serotype III (strain NEM316)</name>
    <dbReference type="NCBI Taxonomy" id="211110"/>
    <lineage>
        <taxon>Bacteria</taxon>
        <taxon>Bacillati</taxon>
        <taxon>Bacillota</taxon>
        <taxon>Bacilli</taxon>
        <taxon>Lactobacillales</taxon>
        <taxon>Streptococcaceae</taxon>
        <taxon>Streptococcus</taxon>
    </lineage>
</organism>
<feature type="chain" id="PRO_1000054028" description="Uridylate kinase">
    <location>
        <begin position="1"/>
        <end position="242"/>
    </location>
</feature>
<feature type="region of interest" description="Involved in allosteric activation by GTP" evidence="1">
    <location>
        <begin position="19"/>
        <end position="24"/>
    </location>
</feature>
<feature type="binding site" evidence="1">
    <location>
        <begin position="11"/>
        <end position="14"/>
    </location>
    <ligand>
        <name>ATP</name>
        <dbReference type="ChEBI" id="CHEBI:30616"/>
    </ligand>
</feature>
<feature type="binding site" evidence="1">
    <location>
        <position position="53"/>
    </location>
    <ligand>
        <name>UMP</name>
        <dbReference type="ChEBI" id="CHEBI:57865"/>
    </ligand>
</feature>
<feature type="binding site" evidence="1">
    <location>
        <position position="54"/>
    </location>
    <ligand>
        <name>ATP</name>
        <dbReference type="ChEBI" id="CHEBI:30616"/>
    </ligand>
</feature>
<feature type="binding site" evidence="1">
    <location>
        <position position="58"/>
    </location>
    <ligand>
        <name>ATP</name>
        <dbReference type="ChEBI" id="CHEBI:30616"/>
    </ligand>
</feature>
<feature type="binding site" evidence="1">
    <location>
        <position position="73"/>
    </location>
    <ligand>
        <name>UMP</name>
        <dbReference type="ChEBI" id="CHEBI:57865"/>
    </ligand>
</feature>
<feature type="binding site" evidence="1">
    <location>
        <begin position="134"/>
        <end position="141"/>
    </location>
    <ligand>
        <name>UMP</name>
        <dbReference type="ChEBI" id="CHEBI:57865"/>
    </ligand>
</feature>
<feature type="binding site" evidence="1">
    <location>
        <position position="162"/>
    </location>
    <ligand>
        <name>ATP</name>
        <dbReference type="ChEBI" id="CHEBI:30616"/>
    </ligand>
</feature>
<feature type="binding site" evidence="1">
    <location>
        <position position="168"/>
    </location>
    <ligand>
        <name>ATP</name>
        <dbReference type="ChEBI" id="CHEBI:30616"/>
    </ligand>
</feature>
<feature type="binding site" evidence="1">
    <location>
        <position position="171"/>
    </location>
    <ligand>
        <name>ATP</name>
        <dbReference type="ChEBI" id="CHEBI:30616"/>
    </ligand>
</feature>
<proteinExistence type="inferred from homology"/>
<gene>
    <name evidence="1" type="primary">pyrH</name>
    <name type="ordered locus">gbs1572</name>
</gene>
<evidence type="ECO:0000255" key="1">
    <source>
        <dbReference type="HAMAP-Rule" id="MF_01220"/>
    </source>
</evidence>
<comment type="function">
    <text evidence="1">Catalyzes the reversible phosphorylation of UMP to UDP.</text>
</comment>
<comment type="catalytic activity">
    <reaction evidence="1">
        <text>UMP + ATP = UDP + ADP</text>
        <dbReference type="Rhea" id="RHEA:24400"/>
        <dbReference type="ChEBI" id="CHEBI:30616"/>
        <dbReference type="ChEBI" id="CHEBI:57865"/>
        <dbReference type="ChEBI" id="CHEBI:58223"/>
        <dbReference type="ChEBI" id="CHEBI:456216"/>
        <dbReference type="EC" id="2.7.4.22"/>
    </reaction>
</comment>
<comment type="activity regulation">
    <text evidence="1">Allosterically activated by GTP. Inhibited by UTP.</text>
</comment>
<comment type="pathway">
    <text evidence="1">Pyrimidine metabolism; CTP biosynthesis via de novo pathway; UDP from UMP (UMPK route): step 1/1.</text>
</comment>
<comment type="subunit">
    <text evidence="1">Homohexamer.</text>
</comment>
<comment type="subcellular location">
    <subcellularLocation>
        <location evidence="1">Cytoplasm</location>
    </subcellularLocation>
</comment>
<comment type="similarity">
    <text evidence="1">Belongs to the UMP kinase family.</text>
</comment>
<name>PYRH_STRA3</name>
<keyword id="KW-0021">Allosteric enzyme</keyword>
<keyword id="KW-0067">ATP-binding</keyword>
<keyword id="KW-0963">Cytoplasm</keyword>
<keyword id="KW-0418">Kinase</keyword>
<keyword id="KW-0547">Nucleotide-binding</keyword>
<keyword id="KW-0665">Pyrimidine biosynthesis</keyword>
<keyword id="KW-0808">Transferase</keyword>
<dbReference type="EC" id="2.7.4.22" evidence="1"/>
<dbReference type="EMBL" id="AL766852">
    <property type="protein sequence ID" value="CAD47231.1"/>
    <property type="molecule type" value="Genomic_DNA"/>
</dbReference>
<dbReference type="RefSeq" id="WP_000433490.1">
    <property type="nucleotide sequence ID" value="NC_004368.1"/>
</dbReference>
<dbReference type="SMR" id="Q8E431"/>
<dbReference type="KEGG" id="san:pyrH"/>
<dbReference type="eggNOG" id="COG0528">
    <property type="taxonomic scope" value="Bacteria"/>
</dbReference>
<dbReference type="HOGENOM" id="CLU_033861_0_0_9"/>
<dbReference type="UniPathway" id="UPA00159">
    <property type="reaction ID" value="UER00275"/>
</dbReference>
<dbReference type="Proteomes" id="UP000000823">
    <property type="component" value="Chromosome"/>
</dbReference>
<dbReference type="GO" id="GO:0005737">
    <property type="term" value="C:cytoplasm"/>
    <property type="evidence" value="ECO:0007669"/>
    <property type="project" value="UniProtKB-SubCell"/>
</dbReference>
<dbReference type="GO" id="GO:0005524">
    <property type="term" value="F:ATP binding"/>
    <property type="evidence" value="ECO:0007669"/>
    <property type="project" value="UniProtKB-KW"/>
</dbReference>
<dbReference type="GO" id="GO:0033862">
    <property type="term" value="F:UMP kinase activity"/>
    <property type="evidence" value="ECO:0007669"/>
    <property type="project" value="UniProtKB-EC"/>
</dbReference>
<dbReference type="GO" id="GO:0044210">
    <property type="term" value="P:'de novo' CTP biosynthetic process"/>
    <property type="evidence" value="ECO:0007669"/>
    <property type="project" value="UniProtKB-UniRule"/>
</dbReference>
<dbReference type="GO" id="GO:0006225">
    <property type="term" value="P:UDP biosynthetic process"/>
    <property type="evidence" value="ECO:0007669"/>
    <property type="project" value="TreeGrafter"/>
</dbReference>
<dbReference type="CDD" id="cd04254">
    <property type="entry name" value="AAK_UMPK-PyrH-Ec"/>
    <property type="match status" value="1"/>
</dbReference>
<dbReference type="FunFam" id="3.40.1160.10:FF:000019">
    <property type="entry name" value="Uridylate kinase"/>
    <property type="match status" value="1"/>
</dbReference>
<dbReference type="Gene3D" id="3.40.1160.10">
    <property type="entry name" value="Acetylglutamate kinase-like"/>
    <property type="match status" value="1"/>
</dbReference>
<dbReference type="HAMAP" id="MF_01220_B">
    <property type="entry name" value="PyrH_B"/>
    <property type="match status" value="1"/>
</dbReference>
<dbReference type="InterPro" id="IPR036393">
    <property type="entry name" value="AceGlu_kinase-like_sf"/>
</dbReference>
<dbReference type="InterPro" id="IPR001048">
    <property type="entry name" value="Asp/Glu/Uridylate_kinase"/>
</dbReference>
<dbReference type="InterPro" id="IPR011817">
    <property type="entry name" value="Uridylate_kinase"/>
</dbReference>
<dbReference type="InterPro" id="IPR015963">
    <property type="entry name" value="Uridylate_kinase_bac"/>
</dbReference>
<dbReference type="NCBIfam" id="TIGR02075">
    <property type="entry name" value="pyrH_bact"/>
    <property type="match status" value="1"/>
</dbReference>
<dbReference type="PANTHER" id="PTHR42833">
    <property type="entry name" value="URIDYLATE KINASE"/>
    <property type="match status" value="1"/>
</dbReference>
<dbReference type="PANTHER" id="PTHR42833:SF4">
    <property type="entry name" value="URIDYLATE KINASE PUMPKIN, CHLOROPLASTIC"/>
    <property type="match status" value="1"/>
</dbReference>
<dbReference type="Pfam" id="PF00696">
    <property type="entry name" value="AA_kinase"/>
    <property type="match status" value="1"/>
</dbReference>
<dbReference type="PIRSF" id="PIRSF005650">
    <property type="entry name" value="Uridylate_kin"/>
    <property type="match status" value="1"/>
</dbReference>
<dbReference type="SUPFAM" id="SSF53633">
    <property type="entry name" value="Carbamate kinase-like"/>
    <property type="match status" value="1"/>
</dbReference>